<organism>
    <name type="scientific">Nostoc punctiforme (strain ATCC 29133 / PCC 73102)</name>
    <dbReference type="NCBI Taxonomy" id="63737"/>
    <lineage>
        <taxon>Bacteria</taxon>
        <taxon>Bacillati</taxon>
        <taxon>Cyanobacteriota</taxon>
        <taxon>Cyanophyceae</taxon>
        <taxon>Nostocales</taxon>
        <taxon>Nostocaceae</taxon>
        <taxon>Nostoc</taxon>
    </lineage>
</organism>
<keyword id="KW-0560">Oxidoreductase</keyword>
<keyword id="KW-0663">Pyridoxal phosphate</keyword>
<keyword id="KW-1185">Reference proteome</keyword>
<reference key="1">
    <citation type="journal article" date="2013" name="Plant Physiol.">
        <title>A Nostoc punctiforme Sugar Transporter Necessary to Establish a Cyanobacterium-Plant Symbiosis.</title>
        <authorList>
            <person name="Ekman M."/>
            <person name="Picossi S."/>
            <person name="Campbell E.L."/>
            <person name="Meeks J.C."/>
            <person name="Flores E."/>
        </authorList>
    </citation>
    <scope>NUCLEOTIDE SEQUENCE [LARGE SCALE GENOMIC DNA]</scope>
    <source>
        <strain>ATCC 29133 / PCC 73102</strain>
    </source>
</reference>
<feature type="chain" id="PRO_1000132445" description="Glycine dehydrogenase (decarboxylating)">
    <location>
        <begin position="1"/>
        <end position="979"/>
    </location>
</feature>
<feature type="modified residue" description="N6-(pyridoxal phosphate)lysine" evidence="1">
    <location>
        <position position="724"/>
    </location>
</feature>
<sequence length="979" mass="106853">MVLNAPILKSNEQQVLNQKSQKLSSFAPRHIGPNSDDIQQMLKVLGFPSLDALIDKTVPQTIRLKQPLKLPEAESEYAALASLKKIAAKNQVFRSYIGMGYYDTITPLVIGRNILENPGWYTAYTPYQPEIAQGRLEALLNFQTLIIDLTGLEIANASLLDEATAAAEAMSLSYGVSKNQANAYFVSHDCHPQTIDVLQTRAKPLGINIIVGDHQTFDFDRAIFGAVLQYPASDGTIYDYRAFIEKAHAKGALVTVAADPLSLTLLTPPGEFGADIAVGSTQRFGIPLGFGGPHAAYFATKEEYKRLVPGRIVGVSKDAQGKPALRLALQTREQHIRREKATSNICTAQVLLAVMASMYAVYHGPDGLKQIAENIHQLTLMLAAGLKHLGYKISSEHFFDTLRVELGTRSLEVILEACQARNINLRIFDDTAVGISVDETTTADDLIELFEIFAAPDSLLFGFKEIGDLIAARRKSSLQNSTFARTSNYLTHPVFNRYHSETELLRYLHKLESKDLSLTTSMIPLGSCTMKLNATAEMIPVTWEEFGKIHPFAPASQTQGYQILFQQLEAWLAEITGFAGISLQPNAGSQGEYAGLLVIRQYHENRGEAHRNVCLIPTSAHGTNPASAVMCGMKVVAVACDSQGNIDVDDLKAKAEKHSHELAALMVTYPSTHGVFEEPIQEICAVVHSHGGQVYMDGANMNAQVGICRPGDIGADVCHLNLHKTFCIPHGGGGPGMGPIGVASHLVPFLPGHPVVTINDSTQHSHIGAVAAAPWGSASILVISWMYIAMMGADGLTQATKVAILNANYIAKKLESYYPVLYQGKNGLVAHECILDLRSLKKSAAIEIDDVAKRLMDYGFHAPTVSWPVGGTIMVEPTESESKQELDRFCDALIAIRQEIAEIEVGKVDAQDNVLKNAPHTAESLITGEWQHPYSREQAAYPAPWTREYKFWPAVGRIDAAFGDRNFVCSCLPMDAYSS</sequence>
<proteinExistence type="inferred from homology"/>
<accession>B2J427</accession>
<protein>
    <recommendedName>
        <fullName evidence="1">Glycine dehydrogenase (decarboxylating)</fullName>
        <ecNumber evidence="1">1.4.4.2</ecNumber>
    </recommendedName>
    <alternativeName>
        <fullName evidence="1">Glycine cleavage system P-protein</fullName>
    </alternativeName>
    <alternativeName>
        <fullName evidence="1">Glycine decarboxylase</fullName>
    </alternativeName>
    <alternativeName>
        <fullName evidence="1">Glycine dehydrogenase (aminomethyl-transferring)</fullName>
    </alternativeName>
</protein>
<evidence type="ECO:0000255" key="1">
    <source>
        <dbReference type="HAMAP-Rule" id="MF_00711"/>
    </source>
</evidence>
<gene>
    <name evidence="1" type="primary">gcvP</name>
    <name type="ordered locus">Npun_R3754</name>
</gene>
<comment type="function">
    <text evidence="1">The glycine cleavage system catalyzes the degradation of glycine. The P protein binds the alpha-amino group of glycine through its pyridoxal phosphate cofactor; CO(2) is released and the remaining methylamine moiety is then transferred to the lipoamide cofactor of the H protein.</text>
</comment>
<comment type="catalytic activity">
    <reaction evidence="1">
        <text>N(6)-[(R)-lipoyl]-L-lysyl-[glycine-cleavage complex H protein] + glycine + H(+) = N(6)-[(R)-S(8)-aminomethyldihydrolipoyl]-L-lysyl-[glycine-cleavage complex H protein] + CO2</text>
        <dbReference type="Rhea" id="RHEA:24304"/>
        <dbReference type="Rhea" id="RHEA-COMP:10494"/>
        <dbReference type="Rhea" id="RHEA-COMP:10495"/>
        <dbReference type="ChEBI" id="CHEBI:15378"/>
        <dbReference type="ChEBI" id="CHEBI:16526"/>
        <dbReference type="ChEBI" id="CHEBI:57305"/>
        <dbReference type="ChEBI" id="CHEBI:83099"/>
        <dbReference type="ChEBI" id="CHEBI:83143"/>
        <dbReference type="EC" id="1.4.4.2"/>
    </reaction>
</comment>
<comment type="cofactor">
    <cofactor evidence="1">
        <name>pyridoxal 5'-phosphate</name>
        <dbReference type="ChEBI" id="CHEBI:597326"/>
    </cofactor>
</comment>
<comment type="subunit">
    <text evidence="1">The glycine cleavage system is composed of four proteins: P, T, L and H.</text>
</comment>
<comment type="similarity">
    <text evidence="1">Belongs to the GcvP family.</text>
</comment>
<dbReference type="EC" id="1.4.4.2" evidence="1"/>
<dbReference type="EMBL" id="CP001037">
    <property type="protein sequence ID" value="ACC82139.1"/>
    <property type="molecule type" value="Genomic_DNA"/>
</dbReference>
<dbReference type="RefSeq" id="WP_012410110.1">
    <property type="nucleotide sequence ID" value="NC_010628.1"/>
</dbReference>
<dbReference type="SMR" id="B2J427"/>
<dbReference type="STRING" id="63737.Npun_R3754"/>
<dbReference type="EnsemblBacteria" id="ACC82139">
    <property type="protein sequence ID" value="ACC82139"/>
    <property type="gene ID" value="Npun_R3754"/>
</dbReference>
<dbReference type="KEGG" id="npu:Npun_R3754"/>
<dbReference type="eggNOG" id="COG0403">
    <property type="taxonomic scope" value="Bacteria"/>
</dbReference>
<dbReference type="eggNOG" id="COG1003">
    <property type="taxonomic scope" value="Bacteria"/>
</dbReference>
<dbReference type="HOGENOM" id="CLU_004620_1_1_3"/>
<dbReference type="OrthoDB" id="9801272at2"/>
<dbReference type="PhylomeDB" id="B2J427"/>
<dbReference type="Proteomes" id="UP000001191">
    <property type="component" value="Chromosome"/>
</dbReference>
<dbReference type="GO" id="GO:0005829">
    <property type="term" value="C:cytosol"/>
    <property type="evidence" value="ECO:0007669"/>
    <property type="project" value="TreeGrafter"/>
</dbReference>
<dbReference type="GO" id="GO:0005960">
    <property type="term" value="C:glycine cleavage complex"/>
    <property type="evidence" value="ECO:0007669"/>
    <property type="project" value="TreeGrafter"/>
</dbReference>
<dbReference type="GO" id="GO:0016594">
    <property type="term" value="F:glycine binding"/>
    <property type="evidence" value="ECO:0007669"/>
    <property type="project" value="TreeGrafter"/>
</dbReference>
<dbReference type="GO" id="GO:0004375">
    <property type="term" value="F:glycine dehydrogenase (decarboxylating) activity"/>
    <property type="evidence" value="ECO:0007669"/>
    <property type="project" value="UniProtKB-EC"/>
</dbReference>
<dbReference type="GO" id="GO:0030170">
    <property type="term" value="F:pyridoxal phosphate binding"/>
    <property type="evidence" value="ECO:0007669"/>
    <property type="project" value="TreeGrafter"/>
</dbReference>
<dbReference type="GO" id="GO:0019464">
    <property type="term" value="P:glycine decarboxylation via glycine cleavage system"/>
    <property type="evidence" value="ECO:0007669"/>
    <property type="project" value="UniProtKB-UniRule"/>
</dbReference>
<dbReference type="CDD" id="cd00613">
    <property type="entry name" value="GDC-P"/>
    <property type="match status" value="2"/>
</dbReference>
<dbReference type="FunFam" id="3.90.1150.10:FF:000025">
    <property type="entry name" value="Glycine cleavage system P protein"/>
    <property type="match status" value="1"/>
</dbReference>
<dbReference type="FunFam" id="3.40.640.10:FF:000005">
    <property type="entry name" value="Glycine dehydrogenase (decarboxylating), mitochondrial"/>
    <property type="match status" value="1"/>
</dbReference>
<dbReference type="FunFam" id="3.90.1150.10:FF:000007">
    <property type="entry name" value="Glycine dehydrogenase (decarboxylating), mitochondrial"/>
    <property type="match status" value="1"/>
</dbReference>
<dbReference type="FunFam" id="3.40.640.10:FF:000007">
    <property type="entry name" value="glycine dehydrogenase (Decarboxylating), mitochondrial"/>
    <property type="match status" value="1"/>
</dbReference>
<dbReference type="Gene3D" id="3.90.1150.10">
    <property type="entry name" value="Aspartate Aminotransferase, domain 1"/>
    <property type="match status" value="2"/>
</dbReference>
<dbReference type="Gene3D" id="3.40.640.10">
    <property type="entry name" value="Type I PLP-dependent aspartate aminotransferase-like (Major domain)"/>
    <property type="match status" value="2"/>
</dbReference>
<dbReference type="HAMAP" id="MF_00711">
    <property type="entry name" value="GcvP"/>
    <property type="match status" value="1"/>
</dbReference>
<dbReference type="InterPro" id="IPR003437">
    <property type="entry name" value="GcvP"/>
</dbReference>
<dbReference type="InterPro" id="IPR049316">
    <property type="entry name" value="GDC-P_C"/>
</dbReference>
<dbReference type="InterPro" id="IPR049315">
    <property type="entry name" value="GDC-P_N"/>
</dbReference>
<dbReference type="InterPro" id="IPR020581">
    <property type="entry name" value="GDC_P"/>
</dbReference>
<dbReference type="InterPro" id="IPR015424">
    <property type="entry name" value="PyrdxlP-dep_Trfase"/>
</dbReference>
<dbReference type="InterPro" id="IPR015421">
    <property type="entry name" value="PyrdxlP-dep_Trfase_major"/>
</dbReference>
<dbReference type="InterPro" id="IPR015422">
    <property type="entry name" value="PyrdxlP-dep_Trfase_small"/>
</dbReference>
<dbReference type="NCBIfam" id="TIGR00461">
    <property type="entry name" value="gcvP"/>
    <property type="match status" value="1"/>
</dbReference>
<dbReference type="NCBIfam" id="NF003346">
    <property type="entry name" value="PRK04366.1"/>
    <property type="match status" value="1"/>
</dbReference>
<dbReference type="PANTHER" id="PTHR11773:SF1">
    <property type="entry name" value="GLYCINE DEHYDROGENASE (DECARBOXYLATING), MITOCHONDRIAL"/>
    <property type="match status" value="1"/>
</dbReference>
<dbReference type="PANTHER" id="PTHR11773">
    <property type="entry name" value="GLYCINE DEHYDROGENASE, DECARBOXYLATING"/>
    <property type="match status" value="1"/>
</dbReference>
<dbReference type="Pfam" id="PF21478">
    <property type="entry name" value="GcvP2_C"/>
    <property type="match status" value="1"/>
</dbReference>
<dbReference type="Pfam" id="PF02347">
    <property type="entry name" value="GDC-P"/>
    <property type="match status" value="2"/>
</dbReference>
<dbReference type="SUPFAM" id="SSF53383">
    <property type="entry name" value="PLP-dependent transferases"/>
    <property type="match status" value="2"/>
</dbReference>
<name>GCSP_NOSP7</name>